<dbReference type="EC" id="3.1.26.4" evidence="1"/>
<dbReference type="EMBL" id="CP001131">
    <property type="protein sequence ID" value="ACG73029.1"/>
    <property type="molecule type" value="Genomic_DNA"/>
</dbReference>
<dbReference type="RefSeq" id="WP_012525845.1">
    <property type="nucleotide sequence ID" value="NC_011145.1"/>
</dbReference>
<dbReference type="SMR" id="B4UMK8"/>
<dbReference type="KEGG" id="ank:AnaeK_1800"/>
<dbReference type="HOGENOM" id="CLU_030894_6_1_7"/>
<dbReference type="OrthoDB" id="7845843at2"/>
<dbReference type="Proteomes" id="UP000001871">
    <property type="component" value="Chromosome"/>
</dbReference>
<dbReference type="GO" id="GO:0005737">
    <property type="term" value="C:cytoplasm"/>
    <property type="evidence" value="ECO:0007669"/>
    <property type="project" value="UniProtKB-SubCell"/>
</dbReference>
<dbReference type="GO" id="GO:0000287">
    <property type="term" value="F:magnesium ion binding"/>
    <property type="evidence" value="ECO:0007669"/>
    <property type="project" value="UniProtKB-UniRule"/>
</dbReference>
<dbReference type="GO" id="GO:0003676">
    <property type="term" value="F:nucleic acid binding"/>
    <property type="evidence" value="ECO:0007669"/>
    <property type="project" value="InterPro"/>
</dbReference>
<dbReference type="GO" id="GO:0004523">
    <property type="term" value="F:RNA-DNA hybrid ribonuclease activity"/>
    <property type="evidence" value="ECO:0007669"/>
    <property type="project" value="UniProtKB-UniRule"/>
</dbReference>
<dbReference type="GO" id="GO:0043137">
    <property type="term" value="P:DNA replication, removal of RNA primer"/>
    <property type="evidence" value="ECO:0007669"/>
    <property type="project" value="TreeGrafter"/>
</dbReference>
<dbReference type="CDD" id="cd09278">
    <property type="entry name" value="RNase_HI_prokaryote_like"/>
    <property type="match status" value="1"/>
</dbReference>
<dbReference type="Gene3D" id="3.30.420.10">
    <property type="entry name" value="Ribonuclease H-like superfamily/Ribonuclease H"/>
    <property type="match status" value="1"/>
</dbReference>
<dbReference type="HAMAP" id="MF_00042">
    <property type="entry name" value="RNase_H"/>
    <property type="match status" value="1"/>
</dbReference>
<dbReference type="InterPro" id="IPR050092">
    <property type="entry name" value="RNase_H"/>
</dbReference>
<dbReference type="InterPro" id="IPR012337">
    <property type="entry name" value="RNaseH-like_sf"/>
</dbReference>
<dbReference type="InterPro" id="IPR002156">
    <property type="entry name" value="RNaseH_domain"/>
</dbReference>
<dbReference type="InterPro" id="IPR036397">
    <property type="entry name" value="RNaseH_sf"/>
</dbReference>
<dbReference type="InterPro" id="IPR022892">
    <property type="entry name" value="RNaseHI"/>
</dbReference>
<dbReference type="PANTHER" id="PTHR10642">
    <property type="entry name" value="RIBONUCLEASE H1"/>
    <property type="match status" value="1"/>
</dbReference>
<dbReference type="PANTHER" id="PTHR10642:SF26">
    <property type="entry name" value="RIBONUCLEASE H1"/>
    <property type="match status" value="1"/>
</dbReference>
<dbReference type="Pfam" id="PF00075">
    <property type="entry name" value="RNase_H"/>
    <property type="match status" value="1"/>
</dbReference>
<dbReference type="SUPFAM" id="SSF53098">
    <property type="entry name" value="Ribonuclease H-like"/>
    <property type="match status" value="1"/>
</dbReference>
<dbReference type="PROSITE" id="PS50879">
    <property type="entry name" value="RNASE_H_1"/>
    <property type="match status" value="1"/>
</dbReference>
<sequence length="183" mass="19429">MSQARFIAFSDGSALVNPGGPGGTGFVVLDRARPAYRFGGTRWVEDGPNAVTNNRMELRAVLEALEGLPGGEQVEVISDSRYVVDALSRWIHGWRKKGWRTASGEPVLNRDLIEALDARASALSVRYTWVRGHDGHAVNEVVDQLAQAAARGVAGPGEAEVVAALRAEAFLAGGPAAPRSSRA</sequence>
<reference key="1">
    <citation type="submission" date="2008-08" db="EMBL/GenBank/DDBJ databases">
        <title>Complete sequence of Anaeromyxobacter sp. K.</title>
        <authorList>
            <consortium name="US DOE Joint Genome Institute"/>
            <person name="Lucas S."/>
            <person name="Copeland A."/>
            <person name="Lapidus A."/>
            <person name="Glavina del Rio T."/>
            <person name="Dalin E."/>
            <person name="Tice H."/>
            <person name="Bruce D."/>
            <person name="Goodwin L."/>
            <person name="Pitluck S."/>
            <person name="Saunders E."/>
            <person name="Brettin T."/>
            <person name="Detter J.C."/>
            <person name="Han C."/>
            <person name="Larimer F."/>
            <person name="Land M."/>
            <person name="Hauser L."/>
            <person name="Kyrpides N."/>
            <person name="Ovchinnikiva G."/>
            <person name="Beliaev A."/>
        </authorList>
    </citation>
    <scope>NUCLEOTIDE SEQUENCE [LARGE SCALE GENOMIC DNA]</scope>
    <source>
        <strain>K</strain>
    </source>
</reference>
<organism>
    <name type="scientific">Anaeromyxobacter sp. (strain K)</name>
    <dbReference type="NCBI Taxonomy" id="447217"/>
    <lineage>
        <taxon>Bacteria</taxon>
        <taxon>Pseudomonadati</taxon>
        <taxon>Myxococcota</taxon>
        <taxon>Myxococcia</taxon>
        <taxon>Myxococcales</taxon>
        <taxon>Cystobacterineae</taxon>
        <taxon>Anaeromyxobacteraceae</taxon>
        <taxon>Anaeromyxobacter</taxon>
    </lineage>
</organism>
<keyword id="KW-0963">Cytoplasm</keyword>
<keyword id="KW-0255">Endonuclease</keyword>
<keyword id="KW-0378">Hydrolase</keyword>
<keyword id="KW-0460">Magnesium</keyword>
<keyword id="KW-0479">Metal-binding</keyword>
<keyword id="KW-0540">Nuclease</keyword>
<accession>B4UMK8</accession>
<protein>
    <recommendedName>
        <fullName evidence="1">Ribonuclease H</fullName>
        <shortName evidence="1">RNase H</shortName>
        <ecNumber evidence="1">3.1.26.4</ecNumber>
    </recommendedName>
</protein>
<proteinExistence type="inferred from homology"/>
<name>RNH_ANASK</name>
<comment type="function">
    <text evidence="1">Endonuclease that specifically degrades the RNA of RNA-DNA hybrids.</text>
</comment>
<comment type="catalytic activity">
    <reaction evidence="1">
        <text>Endonucleolytic cleavage to 5'-phosphomonoester.</text>
        <dbReference type="EC" id="3.1.26.4"/>
    </reaction>
</comment>
<comment type="cofactor">
    <cofactor evidence="1">
        <name>Mg(2+)</name>
        <dbReference type="ChEBI" id="CHEBI:18420"/>
    </cofactor>
    <text evidence="1">Binds 1 Mg(2+) ion per subunit. May bind a second metal ion at a regulatory site, or after substrate binding.</text>
</comment>
<comment type="subunit">
    <text evidence="1">Monomer.</text>
</comment>
<comment type="subcellular location">
    <subcellularLocation>
        <location evidence="1">Cytoplasm</location>
    </subcellularLocation>
</comment>
<comment type="similarity">
    <text evidence="1">Belongs to the RNase H family.</text>
</comment>
<feature type="chain" id="PRO_1000090891" description="Ribonuclease H">
    <location>
        <begin position="1"/>
        <end position="183"/>
    </location>
</feature>
<feature type="domain" description="RNase H type-1" evidence="2">
    <location>
        <begin position="2"/>
        <end position="151"/>
    </location>
</feature>
<feature type="binding site" evidence="1">
    <location>
        <position position="11"/>
    </location>
    <ligand>
        <name>Mg(2+)</name>
        <dbReference type="ChEBI" id="CHEBI:18420"/>
        <label>1</label>
    </ligand>
</feature>
<feature type="binding site" evidence="1">
    <location>
        <position position="11"/>
    </location>
    <ligand>
        <name>Mg(2+)</name>
        <dbReference type="ChEBI" id="CHEBI:18420"/>
        <label>2</label>
    </ligand>
</feature>
<feature type="binding site" evidence="1">
    <location>
        <position position="57"/>
    </location>
    <ligand>
        <name>Mg(2+)</name>
        <dbReference type="ChEBI" id="CHEBI:18420"/>
        <label>1</label>
    </ligand>
</feature>
<feature type="binding site" evidence="1">
    <location>
        <position position="79"/>
    </location>
    <ligand>
        <name>Mg(2+)</name>
        <dbReference type="ChEBI" id="CHEBI:18420"/>
        <label>1</label>
    </ligand>
</feature>
<feature type="binding site" evidence="1">
    <location>
        <position position="143"/>
    </location>
    <ligand>
        <name>Mg(2+)</name>
        <dbReference type="ChEBI" id="CHEBI:18420"/>
        <label>2</label>
    </ligand>
</feature>
<gene>
    <name evidence="1" type="primary">rnhA</name>
    <name type="ordered locus">AnaeK_1800</name>
</gene>
<evidence type="ECO:0000255" key="1">
    <source>
        <dbReference type="HAMAP-Rule" id="MF_00042"/>
    </source>
</evidence>
<evidence type="ECO:0000255" key="2">
    <source>
        <dbReference type="PROSITE-ProRule" id="PRU00408"/>
    </source>
</evidence>